<protein>
    <recommendedName>
        <fullName evidence="1">Carbamoyl phosphate synthase large chain</fullName>
        <ecNumber evidence="1">6.3.4.16</ecNumber>
        <ecNumber evidence="1">6.3.5.5</ecNumber>
    </recommendedName>
    <alternativeName>
        <fullName evidence="1">Carbamoyl phosphate synthetase ammonia chain</fullName>
    </alternativeName>
</protein>
<accession>B7JJX3</accession>
<feature type="chain" id="PRO_1000138880" description="Carbamoyl phosphate synthase large chain">
    <location>
        <begin position="1"/>
        <end position="1072"/>
    </location>
</feature>
<feature type="domain" description="ATP-grasp 1" evidence="1">
    <location>
        <begin position="133"/>
        <end position="327"/>
    </location>
</feature>
<feature type="domain" description="ATP-grasp 2" evidence="1">
    <location>
        <begin position="671"/>
        <end position="861"/>
    </location>
</feature>
<feature type="domain" description="MGS-like" evidence="1">
    <location>
        <begin position="930"/>
        <end position="1072"/>
    </location>
</feature>
<feature type="region of interest" description="Carboxyphosphate synthetic domain" evidence="1">
    <location>
        <begin position="1"/>
        <end position="401"/>
    </location>
</feature>
<feature type="region of interest" description="Oligomerization domain" evidence="1">
    <location>
        <begin position="402"/>
        <end position="546"/>
    </location>
</feature>
<feature type="region of interest" description="Carbamoyl phosphate synthetic domain" evidence="1">
    <location>
        <begin position="547"/>
        <end position="929"/>
    </location>
</feature>
<feature type="region of interest" description="Allosteric domain" evidence="1">
    <location>
        <begin position="930"/>
        <end position="1072"/>
    </location>
</feature>
<feature type="binding site" evidence="1">
    <location>
        <position position="129"/>
    </location>
    <ligand>
        <name>ATP</name>
        <dbReference type="ChEBI" id="CHEBI:30616"/>
        <label>1</label>
    </ligand>
</feature>
<feature type="binding site" evidence="1">
    <location>
        <position position="169"/>
    </location>
    <ligand>
        <name>ATP</name>
        <dbReference type="ChEBI" id="CHEBI:30616"/>
        <label>1</label>
    </ligand>
</feature>
<feature type="binding site" evidence="1">
    <location>
        <position position="175"/>
    </location>
    <ligand>
        <name>ATP</name>
        <dbReference type="ChEBI" id="CHEBI:30616"/>
        <label>1</label>
    </ligand>
</feature>
<feature type="binding site" evidence="1">
    <location>
        <position position="176"/>
    </location>
    <ligand>
        <name>ATP</name>
        <dbReference type="ChEBI" id="CHEBI:30616"/>
        <label>1</label>
    </ligand>
</feature>
<feature type="binding site" evidence="1">
    <location>
        <position position="208"/>
    </location>
    <ligand>
        <name>ATP</name>
        <dbReference type="ChEBI" id="CHEBI:30616"/>
        <label>1</label>
    </ligand>
</feature>
<feature type="binding site" evidence="1">
    <location>
        <position position="210"/>
    </location>
    <ligand>
        <name>ATP</name>
        <dbReference type="ChEBI" id="CHEBI:30616"/>
        <label>1</label>
    </ligand>
</feature>
<feature type="binding site" evidence="1">
    <location>
        <position position="215"/>
    </location>
    <ligand>
        <name>ATP</name>
        <dbReference type="ChEBI" id="CHEBI:30616"/>
        <label>1</label>
    </ligand>
</feature>
<feature type="binding site" evidence="1">
    <location>
        <position position="241"/>
    </location>
    <ligand>
        <name>ATP</name>
        <dbReference type="ChEBI" id="CHEBI:30616"/>
        <label>1</label>
    </ligand>
</feature>
<feature type="binding site" evidence="1">
    <location>
        <position position="242"/>
    </location>
    <ligand>
        <name>ATP</name>
        <dbReference type="ChEBI" id="CHEBI:30616"/>
        <label>1</label>
    </ligand>
</feature>
<feature type="binding site" evidence="1">
    <location>
        <position position="243"/>
    </location>
    <ligand>
        <name>ATP</name>
        <dbReference type="ChEBI" id="CHEBI:30616"/>
        <label>1</label>
    </ligand>
</feature>
<feature type="binding site" evidence="1">
    <location>
        <position position="284"/>
    </location>
    <ligand>
        <name>ATP</name>
        <dbReference type="ChEBI" id="CHEBI:30616"/>
        <label>1</label>
    </ligand>
</feature>
<feature type="binding site" evidence="1">
    <location>
        <position position="284"/>
    </location>
    <ligand>
        <name>Mg(2+)</name>
        <dbReference type="ChEBI" id="CHEBI:18420"/>
        <label>1</label>
    </ligand>
</feature>
<feature type="binding site" evidence="1">
    <location>
        <position position="284"/>
    </location>
    <ligand>
        <name>Mn(2+)</name>
        <dbReference type="ChEBI" id="CHEBI:29035"/>
        <label>1</label>
    </ligand>
</feature>
<feature type="binding site" evidence="1">
    <location>
        <position position="298"/>
    </location>
    <ligand>
        <name>ATP</name>
        <dbReference type="ChEBI" id="CHEBI:30616"/>
        <label>1</label>
    </ligand>
</feature>
<feature type="binding site" evidence="1">
    <location>
        <position position="298"/>
    </location>
    <ligand>
        <name>Mg(2+)</name>
        <dbReference type="ChEBI" id="CHEBI:18420"/>
        <label>1</label>
    </ligand>
</feature>
<feature type="binding site" evidence="1">
    <location>
        <position position="298"/>
    </location>
    <ligand>
        <name>Mg(2+)</name>
        <dbReference type="ChEBI" id="CHEBI:18420"/>
        <label>2</label>
    </ligand>
</feature>
<feature type="binding site" evidence="1">
    <location>
        <position position="298"/>
    </location>
    <ligand>
        <name>Mn(2+)</name>
        <dbReference type="ChEBI" id="CHEBI:29035"/>
        <label>1</label>
    </ligand>
</feature>
<feature type="binding site" evidence="1">
    <location>
        <position position="298"/>
    </location>
    <ligand>
        <name>Mn(2+)</name>
        <dbReference type="ChEBI" id="CHEBI:29035"/>
        <label>2</label>
    </ligand>
</feature>
<feature type="binding site" evidence="1">
    <location>
        <position position="300"/>
    </location>
    <ligand>
        <name>Mg(2+)</name>
        <dbReference type="ChEBI" id="CHEBI:18420"/>
        <label>2</label>
    </ligand>
</feature>
<feature type="binding site" evidence="1">
    <location>
        <position position="300"/>
    </location>
    <ligand>
        <name>Mn(2+)</name>
        <dbReference type="ChEBI" id="CHEBI:29035"/>
        <label>2</label>
    </ligand>
</feature>
<feature type="binding site" evidence="1">
    <location>
        <position position="707"/>
    </location>
    <ligand>
        <name>ATP</name>
        <dbReference type="ChEBI" id="CHEBI:30616"/>
        <label>2</label>
    </ligand>
</feature>
<feature type="binding site" evidence="1">
    <location>
        <position position="746"/>
    </location>
    <ligand>
        <name>ATP</name>
        <dbReference type="ChEBI" id="CHEBI:30616"/>
        <label>2</label>
    </ligand>
</feature>
<feature type="binding site" evidence="1">
    <location>
        <position position="752"/>
    </location>
    <ligand>
        <name>ATP</name>
        <dbReference type="ChEBI" id="CHEBI:30616"/>
        <label>2</label>
    </ligand>
</feature>
<feature type="binding site" evidence="1">
    <location>
        <position position="777"/>
    </location>
    <ligand>
        <name>ATP</name>
        <dbReference type="ChEBI" id="CHEBI:30616"/>
        <label>2</label>
    </ligand>
</feature>
<feature type="binding site" evidence="1">
    <location>
        <position position="778"/>
    </location>
    <ligand>
        <name>ATP</name>
        <dbReference type="ChEBI" id="CHEBI:30616"/>
        <label>2</label>
    </ligand>
</feature>
<feature type="binding site" evidence="1">
    <location>
        <position position="779"/>
    </location>
    <ligand>
        <name>ATP</name>
        <dbReference type="ChEBI" id="CHEBI:30616"/>
        <label>2</label>
    </ligand>
</feature>
<feature type="binding site" evidence="1">
    <location>
        <position position="780"/>
    </location>
    <ligand>
        <name>ATP</name>
        <dbReference type="ChEBI" id="CHEBI:30616"/>
        <label>2</label>
    </ligand>
</feature>
<feature type="binding site" evidence="1">
    <location>
        <position position="820"/>
    </location>
    <ligand>
        <name>ATP</name>
        <dbReference type="ChEBI" id="CHEBI:30616"/>
        <label>2</label>
    </ligand>
</feature>
<feature type="binding site" evidence="1">
    <location>
        <position position="820"/>
    </location>
    <ligand>
        <name>Mg(2+)</name>
        <dbReference type="ChEBI" id="CHEBI:18420"/>
        <label>3</label>
    </ligand>
</feature>
<feature type="binding site" evidence="1">
    <location>
        <position position="820"/>
    </location>
    <ligand>
        <name>Mn(2+)</name>
        <dbReference type="ChEBI" id="CHEBI:29035"/>
        <label>3</label>
    </ligand>
</feature>
<feature type="binding site" evidence="1">
    <location>
        <position position="832"/>
    </location>
    <ligand>
        <name>ATP</name>
        <dbReference type="ChEBI" id="CHEBI:30616"/>
        <label>2</label>
    </ligand>
</feature>
<feature type="binding site" evidence="1">
    <location>
        <position position="832"/>
    </location>
    <ligand>
        <name>Mg(2+)</name>
        <dbReference type="ChEBI" id="CHEBI:18420"/>
        <label>3</label>
    </ligand>
</feature>
<feature type="binding site" evidence="1">
    <location>
        <position position="832"/>
    </location>
    <ligand>
        <name>Mg(2+)</name>
        <dbReference type="ChEBI" id="CHEBI:18420"/>
        <label>4</label>
    </ligand>
</feature>
<feature type="binding site" evidence="1">
    <location>
        <position position="832"/>
    </location>
    <ligand>
        <name>Mn(2+)</name>
        <dbReference type="ChEBI" id="CHEBI:29035"/>
        <label>3</label>
    </ligand>
</feature>
<feature type="binding site" evidence="1">
    <location>
        <position position="832"/>
    </location>
    <ligand>
        <name>Mn(2+)</name>
        <dbReference type="ChEBI" id="CHEBI:29035"/>
        <label>4</label>
    </ligand>
</feature>
<feature type="binding site" evidence="1">
    <location>
        <position position="834"/>
    </location>
    <ligand>
        <name>Mg(2+)</name>
        <dbReference type="ChEBI" id="CHEBI:18420"/>
        <label>4</label>
    </ligand>
</feature>
<feature type="binding site" evidence="1">
    <location>
        <position position="834"/>
    </location>
    <ligand>
        <name>Mn(2+)</name>
        <dbReference type="ChEBI" id="CHEBI:29035"/>
        <label>4</label>
    </ligand>
</feature>
<keyword id="KW-0028">Amino-acid biosynthesis</keyword>
<keyword id="KW-0055">Arginine biosynthesis</keyword>
<keyword id="KW-0067">ATP-binding</keyword>
<keyword id="KW-0436">Ligase</keyword>
<keyword id="KW-0460">Magnesium</keyword>
<keyword id="KW-0464">Manganese</keyword>
<keyword id="KW-0479">Metal-binding</keyword>
<keyword id="KW-0547">Nucleotide-binding</keyword>
<keyword id="KW-0665">Pyrimidine biosynthesis</keyword>
<keyword id="KW-0677">Repeat</keyword>
<organism>
    <name type="scientific">Bacillus cereus (strain AH820)</name>
    <dbReference type="NCBI Taxonomy" id="405535"/>
    <lineage>
        <taxon>Bacteria</taxon>
        <taxon>Bacillati</taxon>
        <taxon>Bacillota</taxon>
        <taxon>Bacilli</taxon>
        <taxon>Bacillales</taxon>
        <taxon>Bacillaceae</taxon>
        <taxon>Bacillus</taxon>
        <taxon>Bacillus cereus group</taxon>
    </lineage>
</organism>
<comment type="function">
    <text evidence="1">Large subunit of the glutamine-dependent carbamoyl phosphate synthetase (CPSase). CPSase catalyzes the formation of carbamoyl phosphate from the ammonia moiety of glutamine, carbonate, and phosphate donated by ATP, constituting the first step of 2 biosynthetic pathways, one leading to arginine and/or urea and the other to pyrimidine nucleotides. The large subunit (synthetase) binds the substrates ammonia (free or transferred from glutamine from the small subunit), hydrogencarbonate and ATP and carries out an ATP-coupled ligase reaction, activating hydrogencarbonate by forming carboxy phosphate which reacts with ammonia to form carbamoyl phosphate.</text>
</comment>
<comment type="catalytic activity">
    <reaction evidence="1">
        <text>hydrogencarbonate + L-glutamine + 2 ATP + H2O = carbamoyl phosphate + L-glutamate + 2 ADP + phosphate + 2 H(+)</text>
        <dbReference type="Rhea" id="RHEA:18633"/>
        <dbReference type="ChEBI" id="CHEBI:15377"/>
        <dbReference type="ChEBI" id="CHEBI:15378"/>
        <dbReference type="ChEBI" id="CHEBI:17544"/>
        <dbReference type="ChEBI" id="CHEBI:29985"/>
        <dbReference type="ChEBI" id="CHEBI:30616"/>
        <dbReference type="ChEBI" id="CHEBI:43474"/>
        <dbReference type="ChEBI" id="CHEBI:58228"/>
        <dbReference type="ChEBI" id="CHEBI:58359"/>
        <dbReference type="ChEBI" id="CHEBI:456216"/>
        <dbReference type="EC" id="6.3.5.5"/>
    </reaction>
</comment>
<comment type="catalytic activity">
    <molecule>Carbamoyl phosphate synthase large chain</molecule>
    <reaction evidence="1">
        <text>hydrogencarbonate + NH4(+) + 2 ATP = carbamoyl phosphate + 2 ADP + phosphate + 2 H(+)</text>
        <dbReference type="Rhea" id="RHEA:18029"/>
        <dbReference type="ChEBI" id="CHEBI:15378"/>
        <dbReference type="ChEBI" id="CHEBI:17544"/>
        <dbReference type="ChEBI" id="CHEBI:28938"/>
        <dbReference type="ChEBI" id="CHEBI:30616"/>
        <dbReference type="ChEBI" id="CHEBI:43474"/>
        <dbReference type="ChEBI" id="CHEBI:58228"/>
        <dbReference type="ChEBI" id="CHEBI:456216"/>
        <dbReference type="EC" id="6.3.4.16"/>
    </reaction>
</comment>
<comment type="cofactor">
    <cofactor evidence="1">
        <name>Mg(2+)</name>
        <dbReference type="ChEBI" id="CHEBI:18420"/>
    </cofactor>
    <cofactor evidence="1">
        <name>Mn(2+)</name>
        <dbReference type="ChEBI" id="CHEBI:29035"/>
    </cofactor>
    <text evidence="1">Binds 4 Mg(2+) or Mn(2+) ions per subunit.</text>
</comment>
<comment type="pathway">
    <text evidence="1">Amino-acid biosynthesis; L-arginine biosynthesis; carbamoyl phosphate from bicarbonate: step 1/1.</text>
</comment>
<comment type="pathway">
    <text evidence="1">Pyrimidine metabolism; UMP biosynthesis via de novo pathway; (S)-dihydroorotate from bicarbonate: step 1/3.</text>
</comment>
<comment type="subunit">
    <text evidence="1">Composed of two chains; the small (or glutamine) chain promotes the hydrolysis of glutamine to ammonia, which is used by the large (or ammonia) chain to synthesize carbamoyl phosphate. Tetramer of heterodimers (alpha,beta)4.</text>
</comment>
<comment type="domain">
    <text evidence="1">The large subunit is composed of 2 ATP-grasp domains that are involved in binding the 2 ATP molecules needed for carbamoyl phosphate synthesis. The N-terminal ATP-grasp domain (referred to as the carboxyphosphate synthetic component) catalyzes the ATP-dependent phosphorylation of hydrogencarbonate to carboxyphosphate and the subsequent nucleophilic attack by ammonia to form a carbamate intermediate. The C-terminal ATP-grasp domain (referred to as the carbamoyl phosphate synthetic component) then catalyzes the phosphorylation of carbamate with the second ATP to form the end product carbamoyl phosphate. The reactive and unstable enzyme intermediates are sequentially channeled from one active site to the next through the interior of the protein over a distance of at least 96 A.</text>
</comment>
<comment type="similarity">
    <text evidence="1">Belongs to the CarB family.</text>
</comment>
<dbReference type="EC" id="6.3.4.16" evidence="1"/>
<dbReference type="EC" id="6.3.5.5" evidence="1"/>
<dbReference type="EMBL" id="CP001283">
    <property type="protein sequence ID" value="ACK87374.1"/>
    <property type="molecule type" value="Genomic_DNA"/>
</dbReference>
<dbReference type="RefSeq" id="WP_001126119.1">
    <property type="nucleotide sequence ID" value="NC_011773.1"/>
</dbReference>
<dbReference type="SMR" id="B7JJX3"/>
<dbReference type="KEGG" id="bcu:BCAH820_3900"/>
<dbReference type="HOGENOM" id="CLU_000513_1_0_9"/>
<dbReference type="UniPathway" id="UPA00068">
    <property type="reaction ID" value="UER00171"/>
</dbReference>
<dbReference type="UniPathway" id="UPA00070">
    <property type="reaction ID" value="UER00115"/>
</dbReference>
<dbReference type="Proteomes" id="UP000001363">
    <property type="component" value="Chromosome"/>
</dbReference>
<dbReference type="GO" id="GO:0005737">
    <property type="term" value="C:cytoplasm"/>
    <property type="evidence" value="ECO:0007669"/>
    <property type="project" value="TreeGrafter"/>
</dbReference>
<dbReference type="GO" id="GO:0005524">
    <property type="term" value="F:ATP binding"/>
    <property type="evidence" value="ECO:0007669"/>
    <property type="project" value="UniProtKB-UniRule"/>
</dbReference>
<dbReference type="GO" id="GO:0004087">
    <property type="term" value="F:carbamoyl-phosphate synthase (ammonia) activity"/>
    <property type="evidence" value="ECO:0007669"/>
    <property type="project" value="RHEA"/>
</dbReference>
<dbReference type="GO" id="GO:0004088">
    <property type="term" value="F:carbamoyl-phosphate synthase (glutamine-hydrolyzing) activity"/>
    <property type="evidence" value="ECO:0007669"/>
    <property type="project" value="UniProtKB-UniRule"/>
</dbReference>
<dbReference type="GO" id="GO:0046872">
    <property type="term" value="F:metal ion binding"/>
    <property type="evidence" value="ECO:0007669"/>
    <property type="project" value="UniProtKB-KW"/>
</dbReference>
<dbReference type="GO" id="GO:0044205">
    <property type="term" value="P:'de novo' UMP biosynthetic process"/>
    <property type="evidence" value="ECO:0007669"/>
    <property type="project" value="UniProtKB-UniRule"/>
</dbReference>
<dbReference type="GO" id="GO:0006541">
    <property type="term" value="P:glutamine metabolic process"/>
    <property type="evidence" value="ECO:0007669"/>
    <property type="project" value="TreeGrafter"/>
</dbReference>
<dbReference type="GO" id="GO:0006526">
    <property type="term" value="P:L-arginine biosynthetic process"/>
    <property type="evidence" value="ECO:0007669"/>
    <property type="project" value="UniProtKB-UniRule"/>
</dbReference>
<dbReference type="CDD" id="cd01424">
    <property type="entry name" value="MGS_CPS_II"/>
    <property type="match status" value="1"/>
</dbReference>
<dbReference type="FunFam" id="1.10.1030.10:FF:000002">
    <property type="entry name" value="Carbamoyl-phosphate synthase large chain"/>
    <property type="match status" value="1"/>
</dbReference>
<dbReference type="FunFam" id="3.30.1490.20:FF:000001">
    <property type="entry name" value="Carbamoyl-phosphate synthase large chain"/>
    <property type="match status" value="1"/>
</dbReference>
<dbReference type="FunFam" id="3.30.470.20:FF:000001">
    <property type="entry name" value="Carbamoyl-phosphate synthase large chain"/>
    <property type="match status" value="1"/>
</dbReference>
<dbReference type="FunFam" id="3.30.470.20:FF:000026">
    <property type="entry name" value="Carbamoyl-phosphate synthase large chain"/>
    <property type="match status" value="1"/>
</dbReference>
<dbReference type="FunFam" id="3.40.50.1380:FF:000011">
    <property type="entry name" value="Carbamoyl-phosphate synthase large chain"/>
    <property type="match status" value="1"/>
</dbReference>
<dbReference type="FunFam" id="3.40.50.20:FF:000001">
    <property type="entry name" value="Carbamoyl-phosphate synthase large chain"/>
    <property type="match status" value="2"/>
</dbReference>
<dbReference type="Gene3D" id="3.40.50.20">
    <property type="match status" value="2"/>
</dbReference>
<dbReference type="Gene3D" id="3.30.1490.20">
    <property type="entry name" value="ATP-grasp fold, A domain"/>
    <property type="match status" value="1"/>
</dbReference>
<dbReference type="Gene3D" id="3.30.470.20">
    <property type="entry name" value="ATP-grasp fold, B domain"/>
    <property type="match status" value="2"/>
</dbReference>
<dbReference type="Gene3D" id="1.10.1030.10">
    <property type="entry name" value="Carbamoyl-phosphate synthetase, large subunit oligomerisation domain"/>
    <property type="match status" value="1"/>
</dbReference>
<dbReference type="Gene3D" id="3.40.50.1380">
    <property type="entry name" value="Methylglyoxal synthase-like domain"/>
    <property type="match status" value="1"/>
</dbReference>
<dbReference type="HAMAP" id="MF_01210_A">
    <property type="entry name" value="CPSase_L_chain_A"/>
    <property type="match status" value="1"/>
</dbReference>
<dbReference type="HAMAP" id="MF_01210_B">
    <property type="entry name" value="CPSase_L_chain_B"/>
    <property type="match status" value="1"/>
</dbReference>
<dbReference type="InterPro" id="IPR011761">
    <property type="entry name" value="ATP-grasp"/>
</dbReference>
<dbReference type="InterPro" id="IPR013815">
    <property type="entry name" value="ATP_grasp_subdomain_1"/>
</dbReference>
<dbReference type="InterPro" id="IPR006275">
    <property type="entry name" value="CarbamoylP_synth_lsu"/>
</dbReference>
<dbReference type="InterPro" id="IPR005480">
    <property type="entry name" value="CarbamoylP_synth_lsu_oligo"/>
</dbReference>
<dbReference type="InterPro" id="IPR036897">
    <property type="entry name" value="CarbamoylP_synth_lsu_oligo_sf"/>
</dbReference>
<dbReference type="InterPro" id="IPR005479">
    <property type="entry name" value="CbamoylP_synth_lsu-like_ATP-bd"/>
</dbReference>
<dbReference type="InterPro" id="IPR005483">
    <property type="entry name" value="CbamoylP_synth_lsu_CPSase_dom"/>
</dbReference>
<dbReference type="InterPro" id="IPR011607">
    <property type="entry name" value="MGS-like_dom"/>
</dbReference>
<dbReference type="InterPro" id="IPR036914">
    <property type="entry name" value="MGS-like_dom_sf"/>
</dbReference>
<dbReference type="InterPro" id="IPR033937">
    <property type="entry name" value="MGS_CPS_CarB"/>
</dbReference>
<dbReference type="InterPro" id="IPR016185">
    <property type="entry name" value="PreATP-grasp_dom_sf"/>
</dbReference>
<dbReference type="NCBIfam" id="TIGR01369">
    <property type="entry name" value="CPSaseII_lrg"/>
    <property type="match status" value="1"/>
</dbReference>
<dbReference type="NCBIfam" id="NF003671">
    <property type="entry name" value="PRK05294.1"/>
    <property type="match status" value="1"/>
</dbReference>
<dbReference type="NCBIfam" id="NF009455">
    <property type="entry name" value="PRK12815.1"/>
    <property type="match status" value="1"/>
</dbReference>
<dbReference type="PANTHER" id="PTHR11405:SF53">
    <property type="entry name" value="CARBAMOYL-PHOSPHATE SYNTHASE [AMMONIA], MITOCHONDRIAL"/>
    <property type="match status" value="1"/>
</dbReference>
<dbReference type="PANTHER" id="PTHR11405">
    <property type="entry name" value="CARBAMOYLTRANSFERASE FAMILY MEMBER"/>
    <property type="match status" value="1"/>
</dbReference>
<dbReference type="Pfam" id="PF02786">
    <property type="entry name" value="CPSase_L_D2"/>
    <property type="match status" value="2"/>
</dbReference>
<dbReference type="Pfam" id="PF02787">
    <property type="entry name" value="CPSase_L_D3"/>
    <property type="match status" value="1"/>
</dbReference>
<dbReference type="Pfam" id="PF02142">
    <property type="entry name" value="MGS"/>
    <property type="match status" value="1"/>
</dbReference>
<dbReference type="PRINTS" id="PR00098">
    <property type="entry name" value="CPSASE"/>
</dbReference>
<dbReference type="SMART" id="SM01096">
    <property type="entry name" value="CPSase_L_D3"/>
    <property type="match status" value="1"/>
</dbReference>
<dbReference type="SMART" id="SM01209">
    <property type="entry name" value="GARS_A"/>
    <property type="match status" value="1"/>
</dbReference>
<dbReference type="SMART" id="SM00851">
    <property type="entry name" value="MGS"/>
    <property type="match status" value="1"/>
</dbReference>
<dbReference type="SUPFAM" id="SSF48108">
    <property type="entry name" value="Carbamoyl phosphate synthetase, large subunit connection domain"/>
    <property type="match status" value="1"/>
</dbReference>
<dbReference type="SUPFAM" id="SSF56059">
    <property type="entry name" value="Glutathione synthetase ATP-binding domain-like"/>
    <property type="match status" value="2"/>
</dbReference>
<dbReference type="SUPFAM" id="SSF52335">
    <property type="entry name" value="Methylglyoxal synthase-like"/>
    <property type="match status" value="1"/>
</dbReference>
<dbReference type="SUPFAM" id="SSF52440">
    <property type="entry name" value="PreATP-grasp domain"/>
    <property type="match status" value="2"/>
</dbReference>
<dbReference type="PROSITE" id="PS50975">
    <property type="entry name" value="ATP_GRASP"/>
    <property type="match status" value="2"/>
</dbReference>
<dbReference type="PROSITE" id="PS00866">
    <property type="entry name" value="CPSASE_1"/>
    <property type="match status" value="2"/>
</dbReference>
<dbReference type="PROSITE" id="PS00867">
    <property type="entry name" value="CPSASE_2"/>
    <property type="match status" value="2"/>
</dbReference>
<dbReference type="PROSITE" id="PS51855">
    <property type="entry name" value="MGS"/>
    <property type="match status" value="1"/>
</dbReference>
<proteinExistence type="inferred from homology"/>
<gene>
    <name evidence="1" type="primary">carB</name>
    <name type="ordered locus">BCAH820_3900</name>
</gene>
<reference key="1">
    <citation type="submission" date="2008-10" db="EMBL/GenBank/DDBJ databases">
        <title>Genome sequence of Bacillus cereus AH820.</title>
        <authorList>
            <person name="Dodson R.J."/>
            <person name="Durkin A.S."/>
            <person name="Rosovitz M.J."/>
            <person name="Rasko D.A."/>
            <person name="Hoffmaster A."/>
            <person name="Ravel J."/>
            <person name="Sutton G."/>
        </authorList>
    </citation>
    <scope>NUCLEOTIDE SEQUENCE [LARGE SCALE GENOMIC DNA]</scope>
    <source>
        <strain>AH820</strain>
    </source>
</reference>
<evidence type="ECO:0000255" key="1">
    <source>
        <dbReference type="HAMAP-Rule" id="MF_01210"/>
    </source>
</evidence>
<name>CARB_BACC0</name>
<sequence>MPKRLDINTILVIGSGPIVIGQAAEFDYSGTQACQSLKEEGYKVILVNSNPATIMTDTATADKVYIEPLTLEFVSRIIRKERPDAILPTLGGQTGLNMAVELAKSGVLEECGVEILGTKLSAIEQAEDRDLFRTLMQELNEPTPPSEIIHNLDEAYGFVNEIGYPVIVRPAFTLGGTGGGICHNEEELIEIVTSGLKHSPVTQCLLEKSIAGCKEIEYEVMRDSNDNAIVVCNMENIDPVGVHTGDSIVVAPSQTLSDREYQMLRNTSLRIIRALGIEGGCNVQLALDPYSFQYYVIEVNPRVSRSSALASKATGYPIAKLAAKIAVGLTLDEIVNPVTQKTYACFEPALDYVVSKIPRWPFDKFESANRTLGTQMKATGEVMSIGRNLEESLLKAVRSLELGIYHLELDHLKELDKETMKKRIIKADDERLFIVAEAIRQGVTKEEINEWCEMDFFFLQKVENIVNMEREVKANVGNMEVLQTAKEMGFSDHYIAAAWNKTEREIYDMRKENNMTPVFKMVDTCAAEFESATPYYYSTYADENESIVTDRKSVVVLGSGPIRIGQGVEFDYATVHSVWAIKEAGYEAIIINNNPETVSTDFSISDKLYFEPLTIEDVMHIIDLEKPEGVIVQFGGQTAINLAAKLEEHGVKILGTSLEDLDRAEDRDKFEAALTKLGIPQPVGKTATTVEQAVAIAEEIGYPVLVRPSYVLGGRAMEIVYRQEELLHYMKNAVKVHADHPVLIDRYMVGKEIEVDAISDGENVFIPGIMEHIERAGVHSGDSIGVYPPQSLSEKLKEQIIEHTIALGKGLNIVGLLNIQFVVFKDQVYVIEVNPRASRTVPFLSKITGVPMANVATKVILGQDLVEQGYGTGYHPEEKEVYVKAPVFSFAKLRSVDTTLGPEMKSTGEVMGKDLTLEKALYKGLVASGINIPTHGSVIITVADKDKEEAMEIAKRFHEIGYNLLATAGTAQSLTEQNIPVQVVNKIDSEDYNLLDIIRQGKAQFVINTLTKGKQPARDGFRIRRESVENGVACLTSLDTTRAILRVLESMTFSAHSMKEITQTKRHEVVHA</sequence>